<comment type="function">
    <text evidence="1">Zinc phosphodiesterase, which displays some tRNA 3'-processing endonuclease activity. Probably involved in tRNA maturation, by removing a 3'-trailer from precursor tRNA.</text>
</comment>
<comment type="catalytic activity">
    <reaction evidence="1">
        <text>Endonucleolytic cleavage of RNA, removing extra 3' nucleotides from tRNA precursor, generating 3' termini of tRNAs. A 3'-hydroxy group is left at the tRNA terminus and a 5'-phosphoryl group is left at the trailer molecule.</text>
        <dbReference type="EC" id="3.1.26.11"/>
    </reaction>
</comment>
<comment type="cofactor">
    <cofactor evidence="1">
        <name>Zn(2+)</name>
        <dbReference type="ChEBI" id="CHEBI:29105"/>
    </cofactor>
    <text evidence="1">Binds 2 Zn(2+) ions.</text>
</comment>
<comment type="subunit">
    <text evidence="1">Homodimer.</text>
</comment>
<comment type="similarity">
    <text evidence="1">Belongs to the RNase Z family.</text>
</comment>
<reference key="1">
    <citation type="journal article" date="2007" name="PLoS Biol.">
        <title>Evolution of symbiotic bacteria in the distal human intestine.</title>
        <authorList>
            <person name="Xu J."/>
            <person name="Mahowald M.A."/>
            <person name="Ley R.E."/>
            <person name="Lozupone C.A."/>
            <person name="Hamady M."/>
            <person name="Martens E.C."/>
            <person name="Henrissat B."/>
            <person name="Coutinho P.M."/>
            <person name="Minx P."/>
            <person name="Latreille P."/>
            <person name="Cordum H."/>
            <person name="Van Brunt A."/>
            <person name="Kim K."/>
            <person name="Fulton R.S."/>
            <person name="Fulton L.A."/>
            <person name="Clifton S.W."/>
            <person name="Wilson R.K."/>
            <person name="Knight R.D."/>
            <person name="Gordon J.I."/>
        </authorList>
    </citation>
    <scope>NUCLEOTIDE SEQUENCE [LARGE SCALE GENOMIC DNA]</scope>
    <source>
        <strain>ATCC 8503 / DSM 20701 / CIP 104284 / JCM 5825 / NCTC 11152</strain>
    </source>
</reference>
<keyword id="KW-0255">Endonuclease</keyword>
<keyword id="KW-0378">Hydrolase</keyword>
<keyword id="KW-0479">Metal-binding</keyword>
<keyword id="KW-0540">Nuclease</keyword>
<keyword id="KW-1185">Reference proteome</keyword>
<keyword id="KW-0819">tRNA processing</keyword>
<keyword id="KW-0862">Zinc</keyword>
<protein>
    <recommendedName>
        <fullName evidence="1">Ribonuclease Z</fullName>
        <shortName evidence="1">RNase Z</shortName>
        <ecNumber evidence="1">3.1.26.11</ecNumber>
    </recommendedName>
    <alternativeName>
        <fullName evidence="1">tRNA 3 endonuclease</fullName>
    </alternativeName>
    <alternativeName>
        <fullName evidence="1">tRNase Z</fullName>
    </alternativeName>
</protein>
<name>RNZ_PARD8</name>
<feature type="chain" id="PRO_1000070311" description="Ribonuclease Z">
    <location>
        <begin position="1"/>
        <end position="304"/>
    </location>
</feature>
<feature type="active site" description="Proton acceptor" evidence="1">
    <location>
        <position position="67"/>
    </location>
</feature>
<feature type="binding site" evidence="1">
    <location>
        <position position="63"/>
    </location>
    <ligand>
        <name>Zn(2+)</name>
        <dbReference type="ChEBI" id="CHEBI:29105"/>
        <label>1</label>
        <note>catalytic</note>
    </ligand>
</feature>
<feature type="binding site" evidence="1">
    <location>
        <position position="65"/>
    </location>
    <ligand>
        <name>Zn(2+)</name>
        <dbReference type="ChEBI" id="CHEBI:29105"/>
        <label>1</label>
        <note>catalytic</note>
    </ligand>
</feature>
<feature type="binding site" evidence="1">
    <location>
        <position position="67"/>
    </location>
    <ligand>
        <name>Zn(2+)</name>
        <dbReference type="ChEBI" id="CHEBI:29105"/>
        <label>2</label>
        <note>catalytic</note>
    </ligand>
</feature>
<feature type="binding site" evidence="1">
    <location>
        <position position="68"/>
    </location>
    <ligand>
        <name>Zn(2+)</name>
        <dbReference type="ChEBI" id="CHEBI:29105"/>
        <label>2</label>
        <note>catalytic</note>
    </ligand>
</feature>
<feature type="binding site" evidence="1">
    <location>
        <position position="143"/>
    </location>
    <ligand>
        <name>Zn(2+)</name>
        <dbReference type="ChEBI" id="CHEBI:29105"/>
        <label>1</label>
        <note>catalytic</note>
    </ligand>
</feature>
<feature type="binding site" evidence="1">
    <location>
        <position position="213"/>
    </location>
    <ligand>
        <name>Zn(2+)</name>
        <dbReference type="ChEBI" id="CHEBI:29105"/>
        <label>1</label>
        <note>catalytic</note>
    </ligand>
</feature>
<feature type="binding site" evidence="1">
    <location>
        <position position="213"/>
    </location>
    <ligand>
        <name>Zn(2+)</name>
        <dbReference type="ChEBI" id="CHEBI:29105"/>
        <label>2</label>
        <note>catalytic</note>
    </ligand>
</feature>
<feature type="binding site" evidence="1">
    <location>
        <position position="271"/>
    </location>
    <ligand>
        <name>Zn(2+)</name>
        <dbReference type="ChEBI" id="CHEBI:29105"/>
        <label>2</label>
        <note>catalytic</note>
    </ligand>
</feature>
<proteinExistence type="inferred from homology"/>
<organism>
    <name type="scientific">Parabacteroides distasonis (strain ATCC 8503 / DSM 20701 / CIP 104284 / JCM 5825 / NCTC 11152)</name>
    <dbReference type="NCBI Taxonomy" id="435591"/>
    <lineage>
        <taxon>Bacteria</taxon>
        <taxon>Pseudomonadati</taxon>
        <taxon>Bacteroidota</taxon>
        <taxon>Bacteroidia</taxon>
        <taxon>Bacteroidales</taxon>
        <taxon>Tannerellaceae</taxon>
        <taxon>Parabacteroides</taxon>
    </lineage>
</organism>
<dbReference type="EC" id="3.1.26.11" evidence="1"/>
<dbReference type="EMBL" id="CP000140">
    <property type="protein sequence ID" value="ABR44370.1"/>
    <property type="molecule type" value="Genomic_DNA"/>
</dbReference>
<dbReference type="RefSeq" id="WP_008780650.1">
    <property type="nucleotide sequence ID" value="NC_009615.1"/>
</dbReference>
<dbReference type="SMR" id="A6LFA6"/>
<dbReference type="STRING" id="435591.BDI_2651"/>
<dbReference type="PaxDb" id="435591-BDI_2651"/>
<dbReference type="KEGG" id="pdi:BDI_2651"/>
<dbReference type="eggNOG" id="COG1234">
    <property type="taxonomic scope" value="Bacteria"/>
</dbReference>
<dbReference type="HOGENOM" id="CLU_031317_2_1_10"/>
<dbReference type="BioCyc" id="PDIS435591:G1G5A-2724-MONOMER"/>
<dbReference type="Proteomes" id="UP000000566">
    <property type="component" value="Chromosome"/>
</dbReference>
<dbReference type="GO" id="GO:0042781">
    <property type="term" value="F:3'-tRNA processing endoribonuclease activity"/>
    <property type="evidence" value="ECO:0007669"/>
    <property type="project" value="UniProtKB-UniRule"/>
</dbReference>
<dbReference type="GO" id="GO:0008270">
    <property type="term" value="F:zinc ion binding"/>
    <property type="evidence" value="ECO:0007669"/>
    <property type="project" value="UniProtKB-UniRule"/>
</dbReference>
<dbReference type="CDD" id="cd07717">
    <property type="entry name" value="RNaseZ_ZiPD-like_MBL-fold"/>
    <property type="match status" value="1"/>
</dbReference>
<dbReference type="Gene3D" id="3.60.15.10">
    <property type="entry name" value="Ribonuclease Z/Hydroxyacylglutathione hydrolase-like"/>
    <property type="match status" value="1"/>
</dbReference>
<dbReference type="HAMAP" id="MF_01818">
    <property type="entry name" value="RNase_Z_BN"/>
    <property type="match status" value="1"/>
</dbReference>
<dbReference type="InterPro" id="IPR001279">
    <property type="entry name" value="Metallo-B-lactamas"/>
</dbReference>
<dbReference type="InterPro" id="IPR036866">
    <property type="entry name" value="RibonucZ/Hydroxyglut_hydro"/>
</dbReference>
<dbReference type="InterPro" id="IPR013471">
    <property type="entry name" value="RNase_Z/BN"/>
</dbReference>
<dbReference type="NCBIfam" id="NF000801">
    <property type="entry name" value="PRK00055.1-3"/>
    <property type="match status" value="1"/>
</dbReference>
<dbReference type="NCBIfam" id="TIGR02651">
    <property type="entry name" value="RNase_Z"/>
    <property type="match status" value="1"/>
</dbReference>
<dbReference type="PANTHER" id="PTHR46018">
    <property type="entry name" value="ZINC PHOSPHODIESTERASE ELAC PROTEIN 1"/>
    <property type="match status" value="1"/>
</dbReference>
<dbReference type="PANTHER" id="PTHR46018:SF2">
    <property type="entry name" value="ZINC PHOSPHODIESTERASE ELAC PROTEIN 1"/>
    <property type="match status" value="1"/>
</dbReference>
<dbReference type="Pfam" id="PF12706">
    <property type="entry name" value="Lactamase_B_2"/>
    <property type="match status" value="2"/>
</dbReference>
<dbReference type="SUPFAM" id="SSF56281">
    <property type="entry name" value="Metallo-hydrolase/oxidoreductase"/>
    <property type="match status" value="1"/>
</dbReference>
<evidence type="ECO:0000255" key="1">
    <source>
        <dbReference type="HAMAP-Rule" id="MF_01818"/>
    </source>
</evidence>
<gene>
    <name evidence="1" type="primary">rnz</name>
    <name type="ordered locus">BDI_2651</name>
</gene>
<accession>A6LFA6</accession>
<sequence length="304" mass="34327">MADFDINILGCGSALPTTRHLATSQIVDLRDKLYMIDCGEGTQVQMRRMRIKFSRLNHIFISHLHGDHCFGLPGLISTLGMLGRNGELVIHGPKEIESYMRPVLDIFCKGLPYEIRFNLIDPTTHSLVMEDRSLSVYSIPLKHRIPCCGYLFAEKAKEAHIIREMTDFYQVPVRMMQEIKRGADFVTPEGEVIPNARLTRPAVAPKRYAYCSDTAFHPSIIPIIEGVDLLYHEATFAECDAARAKETFHSTARQAAEIAYKAQVKRLVIGHYSARYEDMAPLKKEADKIFPGTILGEEGMRLSV</sequence>